<evidence type="ECO:0000255" key="1">
    <source>
        <dbReference type="HAMAP-Rule" id="MF_01331"/>
    </source>
</evidence>
<evidence type="ECO:0000256" key="2">
    <source>
        <dbReference type="SAM" id="MobiDB-lite"/>
    </source>
</evidence>
<evidence type="ECO:0000305" key="3"/>
<reference key="1">
    <citation type="submission" date="2006-12" db="EMBL/GenBank/DDBJ databases">
        <title>Complete sequence of Mycobacterium vanbaalenii PYR-1.</title>
        <authorList>
            <consortium name="US DOE Joint Genome Institute"/>
            <person name="Copeland A."/>
            <person name="Lucas S."/>
            <person name="Lapidus A."/>
            <person name="Barry K."/>
            <person name="Detter J.C."/>
            <person name="Glavina del Rio T."/>
            <person name="Hammon N."/>
            <person name="Israni S."/>
            <person name="Dalin E."/>
            <person name="Tice H."/>
            <person name="Pitluck S."/>
            <person name="Singan V."/>
            <person name="Schmutz J."/>
            <person name="Larimer F."/>
            <person name="Land M."/>
            <person name="Hauser L."/>
            <person name="Kyrpides N."/>
            <person name="Anderson I.J."/>
            <person name="Miller C."/>
            <person name="Richardson P."/>
        </authorList>
    </citation>
    <scope>NUCLEOTIDE SEQUENCE [LARGE SCALE GENOMIC DNA]</scope>
    <source>
        <strain>DSM 7251 / JCM 13017 / BCRC 16820 / KCTC 9966 / NRRL B-24157 / PYR-1</strain>
    </source>
</reference>
<feature type="chain" id="PRO_0000354494" description="Large ribosomal subunit protein uL22">
    <location>
        <begin position="1"/>
        <end position="155"/>
    </location>
</feature>
<feature type="region of interest" description="Disordered" evidence="2">
    <location>
        <begin position="109"/>
        <end position="155"/>
    </location>
</feature>
<feature type="compositionally biased region" description="Basic and acidic residues" evidence="2">
    <location>
        <begin position="146"/>
        <end position="155"/>
    </location>
</feature>
<gene>
    <name evidence="1" type="primary">rplV</name>
    <name type="ordered locus">Mvan_1310</name>
</gene>
<comment type="function">
    <text evidence="1">This protein binds specifically to 23S rRNA; its binding is stimulated by other ribosomal proteins, e.g. L4, L17, and L20. It is important during the early stages of 50S assembly. It makes multiple contacts with different domains of the 23S rRNA in the assembled 50S subunit and ribosome (By similarity).</text>
</comment>
<comment type="function">
    <text evidence="1">The globular domain of the protein is located near the polypeptide exit tunnel on the outside of the subunit, while an extended beta-hairpin is found that lines the wall of the exit tunnel in the center of the 70S ribosome.</text>
</comment>
<comment type="subunit">
    <text evidence="1">Part of the 50S ribosomal subunit.</text>
</comment>
<comment type="similarity">
    <text evidence="1">Belongs to the universal ribosomal protein uL22 family.</text>
</comment>
<protein>
    <recommendedName>
        <fullName evidence="1">Large ribosomal subunit protein uL22</fullName>
    </recommendedName>
    <alternativeName>
        <fullName evidence="3">50S ribosomal protein L22</fullName>
    </alternativeName>
</protein>
<sequence>MTTAIEYPSAMAKARFVRISATKARRVIDLVRGKSVEEALDILRWAPQSASEPVAKVIASAAANAQNNEGLDPTSLVVATIHADEGPTAKRIRPRAQGRAYRIRKRTSHITVIVESRPPKKAGKQGASASAARARRAQASKAATKKATDSKEGSE</sequence>
<accession>A1T4P4</accession>
<proteinExistence type="inferred from homology"/>
<name>RL22_MYCVP</name>
<keyword id="KW-0687">Ribonucleoprotein</keyword>
<keyword id="KW-0689">Ribosomal protein</keyword>
<keyword id="KW-0694">RNA-binding</keyword>
<keyword id="KW-0699">rRNA-binding</keyword>
<dbReference type="EMBL" id="CP000511">
    <property type="protein sequence ID" value="ABM12144.1"/>
    <property type="molecule type" value="Genomic_DNA"/>
</dbReference>
<dbReference type="RefSeq" id="WP_011778574.1">
    <property type="nucleotide sequence ID" value="NZ_JACKSD010000069.1"/>
</dbReference>
<dbReference type="SMR" id="A1T4P4"/>
<dbReference type="STRING" id="350058.Mvan_1310"/>
<dbReference type="KEGG" id="mva:Mvan_1310"/>
<dbReference type="eggNOG" id="COG0091">
    <property type="taxonomic scope" value="Bacteria"/>
</dbReference>
<dbReference type="HOGENOM" id="CLU_083987_3_2_11"/>
<dbReference type="Proteomes" id="UP000009159">
    <property type="component" value="Chromosome"/>
</dbReference>
<dbReference type="GO" id="GO:0022625">
    <property type="term" value="C:cytosolic large ribosomal subunit"/>
    <property type="evidence" value="ECO:0007669"/>
    <property type="project" value="TreeGrafter"/>
</dbReference>
<dbReference type="GO" id="GO:0019843">
    <property type="term" value="F:rRNA binding"/>
    <property type="evidence" value="ECO:0007669"/>
    <property type="project" value="UniProtKB-UniRule"/>
</dbReference>
<dbReference type="GO" id="GO:0003735">
    <property type="term" value="F:structural constituent of ribosome"/>
    <property type="evidence" value="ECO:0007669"/>
    <property type="project" value="InterPro"/>
</dbReference>
<dbReference type="GO" id="GO:0006412">
    <property type="term" value="P:translation"/>
    <property type="evidence" value="ECO:0007669"/>
    <property type="project" value="UniProtKB-UniRule"/>
</dbReference>
<dbReference type="CDD" id="cd00336">
    <property type="entry name" value="Ribosomal_L22"/>
    <property type="match status" value="1"/>
</dbReference>
<dbReference type="FunFam" id="3.90.470.10:FF:000002">
    <property type="entry name" value="50S ribosomal protein L22"/>
    <property type="match status" value="1"/>
</dbReference>
<dbReference type="Gene3D" id="3.90.470.10">
    <property type="entry name" value="Ribosomal protein L22/L17"/>
    <property type="match status" value="1"/>
</dbReference>
<dbReference type="HAMAP" id="MF_01331_B">
    <property type="entry name" value="Ribosomal_uL22_B"/>
    <property type="match status" value="1"/>
</dbReference>
<dbReference type="InterPro" id="IPR001063">
    <property type="entry name" value="Ribosomal_uL22"/>
</dbReference>
<dbReference type="InterPro" id="IPR005727">
    <property type="entry name" value="Ribosomal_uL22_bac/chlpt-type"/>
</dbReference>
<dbReference type="InterPro" id="IPR047867">
    <property type="entry name" value="Ribosomal_uL22_bac/org-type"/>
</dbReference>
<dbReference type="InterPro" id="IPR018260">
    <property type="entry name" value="Ribosomal_uL22_CS"/>
</dbReference>
<dbReference type="InterPro" id="IPR036394">
    <property type="entry name" value="Ribosomal_uL22_sf"/>
</dbReference>
<dbReference type="NCBIfam" id="TIGR01044">
    <property type="entry name" value="rplV_bact"/>
    <property type="match status" value="1"/>
</dbReference>
<dbReference type="PANTHER" id="PTHR13501">
    <property type="entry name" value="CHLOROPLAST 50S RIBOSOMAL PROTEIN L22-RELATED"/>
    <property type="match status" value="1"/>
</dbReference>
<dbReference type="PANTHER" id="PTHR13501:SF8">
    <property type="entry name" value="LARGE RIBOSOMAL SUBUNIT PROTEIN UL22M"/>
    <property type="match status" value="1"/>
</dbReference>
<dbReference type="Pfam" id="PF00237">
    <property type="entry name" value="Ribosomal_L22"/>
    <property type="match status" value="1"/>
</dbReference>
<dbReference type="SUPFAM" id="SSF54843">
    <property type="entry name" value="Ribosomal protein L22"/>
    <property type="match status" value="1"/>
</dbReference>
<dbReference type="PROSITE" id="PS00464">
    <property type="entry name" value="RIBOSOMAL_L22"/>
    <property type="match status" value="1"/>
</dbReference>
<organism>
    <name type="scientific">Mycolicibacterium vanbaalenii (strain DSM 7251 / JCM 13017 / BCRC 16820 / KCTC 9966 / NRRL B-24157 / PYR-1)</name>
    <name type="common">Mycobacterium vanbaalenii</name>
    <dbReference type="NCBI Taxonomy" id="350058"/>
    <lineage>
        <taxon>Bacteria</taxon>
        <taxon>Bacillati</taxon>
        <taxon>Actinomycetota</taxon>
        <taxon>Actinomycetes</taxon>
        <taxon>Mycobacteriales</taxon>
        <taxon>Mycobacteriaceae</taxon>
        <taxon>Mycolicibacterium</taxon>
    </lineage>
</organism>